<gene>
    <name evidence="1" type="primary">lexA</name>
    <name type="ordered locus">ELI_06530</name>
</gene>
<comment type="function">
    <text evidence="1">Represses a number of genes involved in the response to DNA damage (SOS response), including recA and lexA. In the presence of single-stranded DNA, RecA interacts with LexA causing an autocatalytic cleavage which disrupts the DNA-binding part of LexA, leading to derepression of the SOS regulon and eventually DNA repair.</text>
</comment>
<comment type="catalytic activity">
    <reaction evidence="1">
        <text>Hydrolysis of Ala-|-Gly bond in repressor LexA.</text>
        <dbReference type="EC" id="3.4.21.88"/>
    </reaction>
</comment>
<comment type="subunit">
    <text evidence="1">Homodimer.</text>
</comment>
<comment type="similarity">
    <text evidence="1">Belongs to the peptidase S24 family.</text>
</comment>
<protein>
    <recommendedName>
        <fullName evidence="1">LexA repressor</fullName>
        <ecNumber evidence="1">3.4.21.88</ecNumber>
    </recommendedName>
</protein>
<sequence>MLTAKQHELIRFIQQRLEETGISPSFEEMKEALDLKSKSGVHRLISALEERGFIRRLPNRARALEILKQPEDVVGGGAKAAQSGSEASNVVDIRTAQAKTVPAPINDVVEIPLHGRIAAGAPIEALEDHQSLPVPAALLGPGDHYALEVSGDSMIEAGIFDGDFALIRRTDSARDGEIVVALVNNEEATLKYLHRDSGRVRLDPANASYEAQVYDPHQVQVQGKLAGLLRRYH</sequence>
<dbReference type="EC" id="3.4.21.88" evidence="1"/>
<dbReference type="EMBL" id="CP000157">
    <property type="protein sequence ID" value="ABC63398.1"/>
    <property type="molecule type" value="Genomic_DNA"/>
</dbReference>
<dbReference type="RefSeq" id="WP_011414234.1">
    <property type="nucleotide sequence ID" value="NC_007722.1"/>
</dbReference>
<dbReference type="SMR" id="Q2NA93"/>
<dbReference type="STRING" id="314225.ELI_06530"/>
<dbReference type="MEROPS" id="S24.001"/>
<dbReference type="KEGG" id="eli:ELI_06530"/>
<dbReference type="eggNOG" id="COG1974">
    <property type="taxonomic scope" value="Bacteria"/>
</dbReference>
<dbReference type="HOGENOM" id="CLU_066192_45_2_5"/>
<dbReference type="OrthoDB" id="9802364at2"/>
<dbReference type="Proteomes" id="UP000008808">
    <property type="component" value="Chromosome"/>
</dbReference>
<dbReference type="GO" id="GO:0003677">
    <property type="term" value="F:DNA binding"/>
    <property type="evidence" value="ECO:0007669"/>
    <property type="project" value="UniProtKB-UniRule"/>
</dbReference>
<dbReference type="GO" id="GO:0004252">
    <property type="term" value="F:serine-type endopeptidase activity"/>
    <property type="evidence" value="ECO:0007669"/>
    <property type="project" value="UniProtKB-UniRule"/>
</dbReference>
<dbReference type="GO" id="GO:0006281">
    <property type="term" value="P:DNA repair"/>
    <property type="evidence" value="ECO:0007669"/>
    <property type="project" value="UniProtKB-UniRule"/>
</dbReference>
<dbReference type="GO" id="GO:0006260">
    <property type="term" value="P:DNA replication"/>
    <property type="evidence" value="ECO:0007669"/>
    <property type="project" value="UniProtKB-UniRule"/>
</dbReference>
<dbReference type="GO" id="GO:0045892">
    <property type="term" value="P:negative regulation of DNA-templated transcription"/>
    <property type="evidence" value="ECO:0007669"/>
    <property type="project" value="UniProtKB-UniRule"/>
</dbReference>
<dbReference type="GO" id="GO:0006508">
    <property type="term" value="P:proteolysis"/>
    <property type="evidence" value="ECO:0007669"/>
    <property type="project" value="InterPro"/>
</dbReference>
<dbReference type="GO" id="GO:0009432">
    <property type="term" value="P:SOS response"/>
    <property type="evidence" value="ECO:0007669"/>
    <property type="project" value="UniProtKB-UniRule"/>
</dbReference>
<dbReference type="CDD" id="cd06529">
    <property type="entry name" value="S24_LexA-like"/>
    <property type="match status" value="1"/>
</dbReference>
<dbReference type="FunFam" id="2.10.109.10:FF:000001">
    <property type="entry name" value="LexA repressor"/>
    <property type="match status" value="1"/>
</dbReference>
<dbReference type="Gene3D" id="2.10.109.10">
    <property type="entry name" value="Umud Fragment, subunit A"/>
    <property type="match status" value="1"/>
</dbReference>
<dbReference type="Gene3D" id="1.10.10.10">
    <property type="entry name" value="Winged helix-like DNA-binding domain superfamily/Winged helix DNA-binding domain"/>
    <property type="match status" value="1"/>
</dbReference>
<dbReference type="HAMAP" id="MF_00015">
    <property type="entry name" value="LexA"/>
    <property type="match status" value="1"/>
</dbReference>
<dbReference type="InterPro" id="IPR006200">
    <property type="entry name" value="LexA"/>
</dbReference>
<dbReference type="InterPro" id="IPR039418">
    <property type="entry name" value="LexA-like"/>
</dbReference>
<dbReference type="InterPro" id="IPR036286">
    <property type="entry name" value="LexA/Signal_pep-like_sf"/>
</dbReference>
<dbReference type="InterPro" id="IPR006199">
    <property type="entry name" value="LexA_DNA-bd_dom"/>
</dbReference>
<dbReference type="InterPro" id="IPR050077">
    <property type="entry name" value="LexA_repressor"/>
</dbReference>
<dbReference type="InterPro" id="IPR006197">
    <property type="entry name" value="Peptidase_S24_LexA"/>
</dbReference>
<dbReference type="InterPro" id="IPR015927">
    <property type="entry name" value="Peptidase_S24_S26A/B/C"/>
</dbReference>
<dbReference type="InterPro" id="IPR036388">
    <property type="entry name" value="WH-like_DNA-bd_sf"/>
</dbReference>
<dbReference type="InterPro" id="IPR036390">
    <property type="entry name" value="WH_DNA-bd_sf"/>
</dbReference>
<dbReference type="NCBIfam" id="TIGR00498">
    <property type="entry name" value="lexA"/>
    <property type="match status" value="1"/>
</dbReference>
<dbReference type="PANTHER" id="PTHR33516">
    <property type="entry name" value="LEXA REPRESSOR"/>
    <property type="match status" value="1"/>
</dbReference>
<dbReference type="PANTHER" id="PTHR33516:SF2">
    <property type="entry name" value="LEXA REPRESSOR-RELATED"/>
    <property type="match status" value="1"/>
</dbReference>
<dbReference type="Pfam" id="PF01726">
    <property type="entry name" value="LexA_DNA_bind"/>
    <property type="match status" value="1"/>
</dbReference>
<dbReference type="Pfam" id="PF00717">
    <property type="entry name" value="Peptidase_S24"/>
    <property type="match status" value="1"/>
</dbReference>
<dbReference type="PRINTS" id="PR00726">
    <property type="entry name" value="LEXASERPTASE"/>
</dbReference>
<dbReference type="SUPFAM" id="SSF51306">
    <property type="entry name" value="LexA/Signal peptidase"/>
    <property type="match status" value="1"/>
</dbReference>
<dbReference type="SUPFAM" id="SSF46785">
    <property type="entry name" value="Winged helix' DNA-binding domain"/>
    <property type="match status" value="1"/>
</dbReference>
<name>LEXA_ERYLH</name>
<feature type="chain" id="PRO_1000001285" description="LexA repressor">
    <location>
        <begin position="1"/>
        <end position="233"/>
    </location>
</feature>
<feature type="DNA-binding region" description="H-T-H motif" evidence="1">
    <location>
        <begin position="26"/>
        <end position="46"/>
    </location>
</feature>
<feature type="active site" description="For autocatalytic cleavage activity" evidence="1">
    <location>
        <position position="153"/>
    </location>
</feature>
<feature type="active site" description="For autocatalytic cleavage activity" evidence="1">
    <location>
        <position position="191"/>
    </location>
</feature>
<feature type="site" description="Cleavage; by autolysis" evidence="1">
    <location>
        <begin position="119"/>
        <end position="120"/>
    </location>
</feature>
<proteinExistence type="inferred from homology"/>
<organism>
    <name type="scientific">Erythrobacter litoralis (strain HTCC2594)</name>
    <dbReference type="NCBI Taxonomy" id="314225"/>
    <lineage>
        <taxon>Bacteria</taxon>
        <taxon>Pseudomonadati</taxon>
        <taxon>Pseudomonadota</taxon>
        <taxon>Alphaproteobacteria</taxon>
        <taxon>Sphingomonadales</taxon>
        <taxon>Erythrobacteraceae</taxon>
        <taxon>Erythrobacter/Porphyrobacter group</taxon>
        <taxon>Erythrobacter</taxon>
    </lineage>
</organism>
<keyword id="KW-0068">Autocatalytic cleavage</keyword>
<keyword id="KW-0227">DNA damage</keyword>
<keyword id="KW-0234">DNA repair</keyword>
<keyword id="KW-0235">DNA replication</keyword>
<keyword id="KW-0238">DNA-binding</keyword>
<keyword id="KW-0378">Hydrolase</keyword>
<keyword id="KW-1185">Reference proteome</keyword>
<keyword id="KW-0678">Repressor</keyword>
<keyword id="KW-0742">SOS response</keyword>
<keyword id="KW-0804">Transcription</keyword>
<keyword id="KW-0805">Transcription regulation</keyword>
<accession>Q2NA93</accession>
<evidence type="ECO:0000255" key="1">
    <source>
        <dbReference type="HAMAP-Rule" id="MF_00015"/>
    </source>
</evidence>
<reference key="1">
    <citation type="journal article" date="2009" name="J. Bacteriol.">
        <title>Complete genome sequence of Erythrobacter litoralis HTCC2594.</title>
        <authorList>
            <person name="Oh H.M."/>
            <person name="Giovannoni S.J."/>
            <person name="Ferriera S."/>
            <person name="Johnson J."/>
            <person name="Cho J.C."/>
        </authorList>
    </citation>
    <scope>NUCLEOTIDE SEQUENCE [LARGE SCALE GENOMIC DNA]</scope>
    <source>
        <strain>HTCC2594</strain>
    </source>
</reference>